<dbReference type="EC" id="1.1.5.4" evidence="1"/>
<dbReference type="EMBL" id="BA000018">
    <property type="protein sequence ID" value="BAB43705.1"/>
    <property type="molecule type" value="Genomic_DNA"/>
</dbReference>
<dbReference type="PIR" id="G90067">
    <property type="entry name" value="G90067"/>
</dbReference>
<dbReference type="SMR" id="P99115"/>
<dbReference type="EnsemblBacteria" id="BAB43705">
    <property type="protein sequence ID" value="BAB43705"/>
    <property type="gene ID" value="BAB43705"/>
</dbReference>
<dbReference type="KEGG" id="sau:SA2400"/>
<dbReference type="HOGENOM" id="CLU_028151_0_0_9"/>
<dbReference type="UniPathway" id="UPA00223">
    <property type="reaction ID" value="UER01008"/>
</dbReference>
<dbReference type="GO" id="GO:0047545">
    <property type="term" value="F:2-hydroxyglutarate dehydrogenase activity"/>
    <property type="evidence" value="ECO:0007669"/>
    <property type="project" value="TreeGrafter"/>
</dbReference>
<dbReference type="GO" id="GO:0008924">
    <property type="term" value="F:L-malate dehydrogenase (quinone) activity"/>
    <property type="evidence" value="ECO:0007669"/>
    <property type="project" value="UniProtKB-UniRule"/>
</dbReference>
<dbReference type="GO" id="GO:0006099">
    <property type="term" value="P:tricarboxylic acid cycle"/>
    <property type="evidence" value="ECO:0007669"/>
    <property type="project" value="UniProtKB-UniRule"/>
</dbReference>
<dbReference type="Gene3D" id="3.30.9.10">
    <property type="entry name" value="D-Amino Acid Oxidase, subunit A, domain 2"/>
    <property type="match status" value="1"/>
</dbReference>
<dbReference type="Gene3D" id="3.50.50.60">
    <property type="entry name" value="FAD/NAD(P)-binding domain"/>
    <property type="match status" value="1"/>
</dbReference>
<dbReference type="HAMAP" id="MF_00212">
    <property type="entry name" value="MQO"/>
    <property type="match status" value="1"/>
</dbReference>
<dbReference type="InterPro" id="IPR036188">
    <property type="entry name" value="FAD/NAD-bd_sf"/>
</dbReference>
<dbReference type="InterPro" id="IPR006231">
    <property type="entry name" value="MQO"/>
</dbReference>
<dbReference type="NCBIfam" id="NF040844">
    <property type="entry name" value="Lac_Quin_Ox_NO"/>
    <property type="match status" value="1"/>
</dbReference>
<dbReference type="NCBIfam" id="TIGR01320">
    <property type="entry name" value="mal_quin_oxido"/>
    <property type="match status" value="1"/>
</dbReference>
<dbReference type="NCBIfam" id="NF003606">
    <property type="entry name" value="PRK05257.2-1"/>
    <property type="match status" value="1"/>
</dbReference>
<dbReference type="NCBIfam" id="NF003611">
    <property type="entry name" value="PRK05257.3-2"/>
    <property type="match status" value="1"/>
</dbReference>
<dbReference type="NCBIfam" id="NF009875">
    <property type="entry name" value="PRK13339.1"/>
    <property type="match status" value="1"/>
</dbReference>
<dbReference type="PANTHER" id="PTHR43104">
    <property type="entry name" value="L-2-HYDROXYGLUTARATE DEHYDROGENASE, MITOCHONDRIAL"/>
    <property type="match status" value="1"/>
</dbReference>
<dbReference type="PANTHER" id="PTHR43104:SF2">
    <property type="entry name" value="L-2-HYDROXYGLUTARATE DEHYDROGENASE, MITOCHONDRIAL"/>
    <property type="match status" value="1"/>
</dbReference>
<dbReference type="Pfam" id="PF06039">
    <property type="entry name" value="Mqo"/>
    <property type="match status" value="1"/>
</dbReference>
<dbReference type="SUPFAM" id="SSF51905">
    <property type="entry name" value="FAD/NAD(P)-binding domain"/>
    <property type="match status" value="1"/>
</dbReference>
<comment type="catalytic activity">
    <reaction evidence="1">
        <text>(S)-malate + a quinone = a quinol + oxaloacetate</text>
        <dbReference type="Rhea" id="RHEA:46012"/>
        <dbReference type="ChEBI" id="CHEBI:15589"/>
        <dbReference type="ChEBI" id="CHEBI:16452"/>
        <dbReference type="ChEBI" id="CHEBI:24646"/>
        <dbReference type="ChEBI" id="CHEBI:132124"/>
        <dbReference type="EC" id="1.1.5.4"/>
    </reaction>
</comment>
<comment type="cofactor">
    <cofactor evidence="1">
        <name>FAD</name>
        <dbReference type="ChEBI" id="CHEBI:57692"/>
    </cofactor>
</comment>
<comment type="pathway">
    <text evidence="1">Carbohydrate metabolism; tricarboxylic acid cycle; oxaloacetate from (S)-malate (quinone route): step 1/1.</text>
</comment>
<comment type="similarity">
    <text evidence="1">Belongs to the MQO family.</text>
</comment>
<accession>P99115</accession>
<accession>Q99R30</accession>
<gene>
    <name evidence="1" type="primary">mqo2</name>
    <name type="ordered locus">SA2400</name>
</gene>
<protein>
    <recommendedName>
        <fullName evidence="1">Probable malate:quinone oxidoreductase 2</fullName>
        <ecNumber evidence="1">1.1.5.4</ecNumber>
    </recommendedName>
    <alternativeName>
        <fullName evidence="1">MQO 2</fullName>
    </alternativeName>
    <alternativeName>
        <fullName evidence="1">Malate dehydrogenase [quinone] 2</fullName>
    </alternativeName>
</protein>
<keyword id="KW-0274">FAD</keyword>
<keyword id="KW-0285">Flavoprotein</keyword>
<keyword id="KW-0560">Oxidoreductase</keyword>
<keyword id="KW-0816">Tricarboxylic acid cycle</keyword>
<sequence>MAKSNSKDIVLIGAGVLSTTFGSMLKEIEPDWNIHVYERLDRPAIESSNERNNAGTGHAALCELNYTVLQPDGSIDIEKAKVINEEFEISKQFWGHLVKSGSIENPREFINPLPHISYVRGKNNVKFLKDRYEAMKAFPMFDNIEYTEDIEVMKKWIPLMMKGREDNPGIMAASKIDEGTDVNFGELTRKMAKSIEAHPNATVQFNHEVVDFEQLSNGQWEVTVKNRLTGEKFKQVTDYVFIGAGGGAIPLLQKTGIPESKHLGGFPISGQFLACTNPQVIEQHDAKVYGKEPPGTPPMTVPHLDTRYIDGQRTLLFGPFANVGPKFLKNGSNLDLFKSVKTYNITTLLAAAVKNLPLIKYSFDQVIMTKEGCMNHLRTFYPEARNEDWQLYTAGKRVQVIKDTPEHGKGFIQFGTEVVNSQDHTVIALLGESPGASTSVSVALEVLERNFPEYKTEWAPKIKKMIPSYGESLIEDEKLMRKIRKQTSKDLELGYYEN</sequence>
<name>MQO2_STAAN</name>
<proteinExistence type="evidence at protein level"/>
<feature type="chain" id="PRO_0000128742" description="Probable malate:quinone oxidoreductase 2">
    <location>
        <begin position="1"/>
        <end position="498"/>
    </location>
</feature>
<reference key="1">
    <citation type="journal article" date="2001" name="Lancet">
        <title>Whole genome sequencing of meticillin-resistant Staphylococcus aureus.</title>
        <authorList>
            <person name="Kuroda M."/>
            <person name="Ohta T."/>
            <person name="Uchiyama I."/>
            <person name="Baba T."/>
            <person name="Yuzawa H."/>
            <person name="Kobayashi I."/>
            <person name="Cui L."/>
            <person name="Oguchi A."/>
            <person name="Aoki K."/>
            <person name="Nagai Y."/>
            <person name="Lian J.-Q."/>
            <person name="Ito T."/>
            <person name="Kanamori M."/>
            <person name="Matsumaru H."/>
            <person name="Maruyama A."/>
            <person name="Murakami H."/>
            <person name="Hosoyama A."/>
            <person name="Mizutani-Ui Y."/>
            <person name="Takahashi N.K."/>
            <person name="Sawano T."/>
            <person name="Inoue R."/>
            <person name="Kaito C."/>
            <person name="Sekimizu K."/>
            <person name="Hirakawa H."/>
            <person name="Kuhara S."/>
            <person name="Goto S."/>
            <person name="Yabuzaki J."/>
            <person name="Kanehisa M."/>
            <person name="Yamashita A."/>
            <person name="Oshima K."/>
            <person name="Furuya K."/>
            <person name="Yoshino C."/>
            <person name="Shiba T."/>
            <person name="Hattori M."/>
            <person name="Ogasawara N."/>
            <person name="Hayashi H."/>
            <person name="Hiramatsu K."/>
        </authorList>
    </citation>
    <scope>NUCLEOTIDE SEQUENCE [LARGE SCALE GENOMIC DNA]</scope>
    <source>
        <strain>N315</strain>
    </source>
</reference>
<reference key="2">
    <citation type="journal article" date="2005" name="J. Microbiol. Methods">
        <title>Correlation of proteomic and transcriptomic profiles of Staphylococcus aureus during the post-exponential phase of growth.</title>
        <authorList>
            <person name="Scherl A."/>
            <person name="Francois P."/>
            <person name="Bento M."/>
            <person name="Deshusses J.M."/>
            <person name="Charbonnier Y."/>
            <person name="Converset V."/>
            <person name="Huyghe A."/>
            <person name="Walter N."/>
            <person name="Hoogland C."/>
            <person name="Appel R.D."/>
            <person name="Sanchez J.-C."/>
            <person name="Zimmermann-Ivol C.G."/>
            <person name="Corthals G.L."/>
            <person name="Hochstrasser D.F."/>
            <person name="Schrenzel J."/>
        </authorList>
    </citation>
    <scope>IDENTIFICATION BY MASS SPECTROMETRY</scope>
    <source>
        <strain>N315</strain>
    </source>
</reference>
<reference key="3">
    <citation type="submission" date="2007-10" db="UniProtKB">
        <title>Shotgun proteomic analysis of total and membrane protein extracts of S. aureus strain N315.</title>
        <authorList>
            <person name="Vaezzadeh A.R."/>
            <person name="Deshusses J."/>
            <person name="Lescuyer P."/>
            <person name="Hochstrasser D.F."/>
        </authorList>
    </citation>
    <scope>IDENTIFICATION BY MASS SPECTROMETRY [LARGE SCALE ANALYSIS]</scope>
    <source>
        <strain>N315</strain>
    </source>
</reference>
<evidence type="ECO:0000255" key="1">
    <source>
        <dbReference type="HAMAP-Rule" id="MF_00212"/>
    </source>
</evidence>
<organism>
    <name type="scientific">Staphylococcus aureus (strain N315)</name>
    <dbReference type="NCBI Taxonomy" id="158879"/>
    <lineage>
        <taxon>Bacteria</taxon>
        <taxon>Bacillati</taxon>
        <taxon>Bacillota</taxon>
        <taxon>Bacilli</taxon>
        <taxon>Bacillales</taxon>
        <taxon>Staphylococcaceae</taxon>
        <taxon>Staphylococcus</taxon>
    </lineage>
</organism>